<accession>Q2KUZ3</accession>
<evidence type="ECO:0000255" key="1">
    <source>
        <dbReference type="HAMAP-Rule" id="MF_00765"/>
    </source>
</evidence>
<evidence type="ECO:0000256" key="2">
    <source>
        <dbReference type="SAM" id="MobiDB-lite"/>
    </source>
</evidence>
<keyword id="KW-0963">Cytoplasm</keyword>
<keyword id="KW-1185">Reference proteome</keyword>
<keyword id="KW-0690">Ribosome biogenesis</keyword>
<keyword id="KW-0694">RNA-binding</keyword>
<keyword id="KW-0699">rRNA-binding</keyword>
<name>DARP_BORA1</name>
<protein>
    <recommendedName>
        <fullName evidence="1">Dual-action ribosomal maturation protein DarP</fullName>
    </recommendedName>
    <alternativeName>
        <fullName evidence="1">Large ribosomal subunit assembly factor DarP</fullName>
    </alternativeName>
</protein>
<comment type="function">
    <text evidence="1">Member of a network of 50S ribosomal subunit biogenesis factors which assembles along the 30S-50S interface, preventing incorrect 23S rRNA structures from forming. Promotes peptidyl transferase center (PTC) maturation.</text>
</comment>
<comment type="subcellular location">
    <subcellularLocation>
        <location evidence="1">Cytoplasm</location>
    </subcellularLocation>
    <text evidence="1">Associates with late stage pre-50S ribosomal subunits.</text>
</comment>
<comment type="similarity">
    <text evidence="1">Belongs to the DarP family.</text>
</comment>
<organism>
    <name type="scientific">Bordetella avium (strain 197N)</name>
    <dbReference type="NCBI Taxonomy" id="360910"/>
    <lineage>
        <taxon>Bacteria</taxon>
        <taxon>Pseudomonadati</taxon>
        <taxon>Pseudomonadota</taxon>
        <taxon>Betaproteobacteria</taxon>
        <taxon>Burkholderiales</taxon>
        <taxon>Alcaligenaceae</taxon>
        <taxon>Bordetella</taxon>
    </lineage>
</organism>
<gene>
    <name evidence="1" type="primary">darP</name>
    <name type="ordered locus">BAV2974</name>
</gene>
<proteinExistence type="inferred from homology"/>
<reference key="1">
    <citation type="journal article" date="2006" name="J. Bacteriol.">
        <title>Comparison of the genome sequence of the poultry pathogen Bordetella avium with those of B. bronchiseptica, B. pertussis, and B. parapertussis reveals extensive diversity in surface structures associated with host interaction.</title>
        <authorList>
            <person name="Sebaihia M."/>
            <person name="Preston A."/>
            <person name="Maskell D.J."/>
            <person name="Kuzmiak H."/>
            <person name="Connell T.D."/>
            <person name="King N.D."/>
            <person name="Orndorff P.E."/>
            <person name="Miyamoto D.M."/>
            <person name="Thomson N.R."/>
            <person name="Harris D."/>
            <person name="Goble A."/>
            <person name="Lord A."/>
            <person name="Murphy L."/>
            <person name="Quail M.A."/>
            <person name="Rutter S."/>
            <person name="Squares R."/>
            <person name="Squares S."/>
            <person name="Woodward J."/>
            <person name="Parkhill J."/>
            <person name="Temple L.M."/>
        </authorList>
    </citation>
    <scope>NUCLEOTIDE SEQUENCE [LARGE SCALE GENOMIC DNA]</scope>
    <source>
        <strain>197N</strain>
    </source>
</reference>
<dbReference type="EMBL" id="AM167904">
    <property type="protein sequence ID" value="CAJ50584.1"/>
    <property type="molecule type" value="Genomic_DNA"/>
</dbReference>
<dbReference type="RefSeq" id="WP_012418613.1">
    <property type="nucleotide sequence ID" value="NC_010645.1"/>
</dbReference>
<dbReference type="SMR" id="Q2KUZ3"/>
<dbReference type="STRING" id="360910.BAV2974"/>
<dbReference type="GeneID" id="92933768"/>
<dbReference type="KEGG" id="bav:BAV2974"/>
<dbReference type="eggNOG" id="COG3028">
    <property type="taxonomic scope" value="Bacteria"/>
</dbReference>
<dbReference type="HOGENOM" id="CLU_106757_1_0_4"/>
<dbReference type="OrthoDB" id="5293604at2"/>
<dbReference type="Proteomes" id="UP000001977">
    <property type="component" value="Chromosome"/>
</dbReference>
<dbReference type="GO" id="GO:0005829">
    <property type="term" value="C:cytosol"/>
    <property type="evidence" value="ECO:0007669"/>
    <property type="project" value="TreeGrafter"/>
</dbReference>
<dbReference type="GO" id="GO:0043022">
    <property type="term" value="F:ribosome binding"/>
    <property type="evidence" value="ECO:0007669"/>
    <property type="project" value="UniProtKB-UniRule"/>
</dbReference>
<dbReference type="GO" id="GO:0019843">
    <property type="term" value="F:rRNA binding"/>
    <property type="evidence" value="ECO:0007669"/>
    <property type="project" value="UniProtKB-UniRule"/>
</dbReference>
<dbReference type="GO" id="GO:1902626">
    <property type="term" value="P:assembly of large subunit precursor of preribosome"/>
    <property type="evidence" value="ECO:0007669"/>
    <property type="project" value="UniProtKB-UniRule"/>
</dbReference>
<dbReference type="CDD" id="cd16331">
    <property type="entry name" value="YjgA-like"/>
    <property type="match status" value="1"/>
</dbReference>
<dbReference type="Gene3D" id="1.10.60.30">
    <property type="entry name" value="PSPTO4464-like domains"/>
    <property type="match status" value="2"/>
</dbReference>
<dbReference type="HAMAP" id="MF_00765">
    <property type="entry name" value="DarP"/>
    <property type="match status" value="1"/>
</dbReference>
<dbReference type="InterPro" id="IPR006839">
    <property type="entry name" value="DarP"/>
</dbReference>
<dbReference type="InterPro" id="IPR023153">
    <property type="entry name" value="DarP_sf"/>
</dbReference>
<dbReference type="NCBIfam" id="NF003593">
    <property type="entry name" value="PRK05255.1-1"/>
    <property type="match status" value="1"/>
</dbReference>
<dbReference type="PANTHER" id="PTHR38101">
    <property type="entry name" value="UPF0307 PROTEIN YJGA"/>
    <property type="match status" value="1"/>
</dbReference>
<dbReference type="PANTHER" id="PTHR38101:SF1">
    <property type="entry name" value="UPF0307 PROTEIN YJGA"/>
    <property type="match status" value="1"/>
</dbReference>
<dbReference type="Pfam" id="PF04751">
    <property type="entry name" value="DarP"/>
    <property type="match status" value="1"/>
</dbReference>
<dbReference type="PIRSF" id="PIRSF016183">
    <property type="entry name" value="UCP016183"/>
    <property type="match status" value="1"/>
</dbReference>
<dbReference type="SUPFAM" id="SSF158710">
    <property type="entry name" value="PSPTO4464-like"/>
    <property type="match status" value="1"/>
</dbReference>
<feature type="chain" id="PRO_0000257622" description="Dual-action ribosomal maturation protein DarP">
    <location>
        <begin position="1"/>
        <end position="184"/>
    </location>
</feature>
<feature type="region of interest" description="Disordered" evidence="2">
    <location>
        <begin position="1"/>
        <end position="27"/>
    </location>
</feature>
<feature type="compositionally biased region" description="Acidic residues" evidence="2">
    <location>
        <begin position="8"/>
        <end position="18"/>
    </location>
</feature>
<sequence length="184" mass="21236">MSIPDTEIPVDDDGYDENGYDRPSKSQVKREMHALLDLGKQLIELSPERLRQLPLEERLYEAIRTAQRTTGREGRRRQIHFVGKLMRAAPADDIRRQLDVWENGSREETAAMHRLEGLRERLIADDEALTELLSRYPGADVQHLRAVIRAARKEAQQNAALLQGQEPQRKQYRALFQALKSLTQ</sequence>